<accession>Q9H665</accession>
<accession>Q8N5X0</accession>
<comment type="function">
    <text evidence="3">Probable cell membrane receptor for the IGF-like family proteins. Binds IGFL1 and IGFL3 with a higher affinity. May also bind IGFL2.</text>
</comment>
<comment type="interaction">
    <interactant intactId="EBI-3870439">
        <id>Q9H665</id>
    </interactant>
    <interactant intactId="EBI-3870426">
        <id>Q6UW32</id>
        <label>IGFL1</label>
    </interactant>
    <organismsDiffer>false</organismsDiffer>
    <experiments>5</experiments>
</comment>
<comment type="subcellular location">
    <subcellularLocation>
        <location evidence="3">Cell membrane</location>
        <topology evidence="3">Single-pass type I membrane protein</topology>
    </subcellularLocation>
</comment>
<comment type="alternative products">
    <event type="alternative splicing"/>
    <isoform>
        <id>Q9H665-1</id>
        <name>1</name>
        <sequence type="displayed"/>
    </isoform>
    <isoform>
        <id>Q9H665-2</id>
        <name>2</name>
        <sequence type="described" ref="VSP_026145"/>
    </isoform>
</comment>
<comment type="induction">
    <text evidence="3">Up-regulated by the pro-inflammatory cytokine TNFA and in skin upon tissue inflammation.</text>
</comment>
<sequence>MGPGRCLLTALLLLALAPPPEASQYCGRLEYWNPDNKCCSSCLQRFGPPPCPDYEFRENCGLNDHGDFVTPPFRKCSSGQCNPDGAELCSPCGGGAVTPTPAAGGGRTPWRCRERPVPAKGHCPLTPGNPGAPSSQERSSPASSIAWRTPEPVPQQAWPNFLPLVVLVLLLTLAVIAILLFILLWHLCWPKEKADPYPYPGLVCGVPNTHTPSSSHLSSPGALETGDTWKEASLLPLLSRELSSLASQPLSRLLDELEVLEELIVLLDPEPGPGGGMAHGTTRHLAARYGLPAAWSTFAYSLRPSRSPLRALIEMVVAREPSASLGQLGTHLAQLGRADALRVLSKLGSSGVCWA</sequence>
<organism>
    <name type="scientific">Homo sapiens</name>
    <name type="common">Human</name>
    <dbReference type="NCBI Taxonomy" id="9606"/>
    <lineage>
        <taxon>Eukaryota</taxon>
        <taxon>Metazoa</taxon>
        <taxon>Chordata</taxon>
        <taxon>Craniata</taxon>
        <taxon>Vertebrata</taxon>
        <taxon>Euteleostomi</taxon>
        <taxon>Mammalia</taxon>
        <taxon>Eutheria</taxon>
        <taxon>Euarchontoglires</taxon>
        <taxon>Primates</taxon>
        <taxon>Haplorrhini</taxon>
        <taxon>Catarrhini</taxon>
        <taxon>Hominidae</taxon>
        <taxon>Homo</taxon>
    </lineage>
</organism>
<reference key="1">
    <citation type="journal article" date="2004" name="Nat. Genet.">
        <title>Complete sequencing and characterization of 21,243 full-length human cDNAs.</title>
        <authorList>
            <person name="Ota T."/>
            <person name="Suzuki Y."/>
            <person name="Nishikawa T."/>
            <person name="Otsuki T."/>
            <person name="Sugiyama T."/>
            <person name="Irie R."/>
            <person name="Wakamatsu A."/>
            <person name="Hayashi K."/>
            <person name="Sato H."/>
            <person name="Nagai K."/>
            <person name="Kimura K."/>
            <person name="Makita H."/>
            <person name="Sekine M."/>
            <person name="Obayashi M."/>
            <person name="Nishi T."/>
            <person name="Shibahara T."/>
            <person name="Tanaka T."/>
            <person name="Ishii S."/>
            <person name="Yamamoto J."/>
            <person name="Saito K."/>
            <person name="Kawai Y."/>
            <person name="Isono Y."/>
            <person name="Nakamura Y."/>
            <person name="Nagahari K."/>
            <person name="Murakami K."/>
            <person name="Yasuda T."/>
            <person name="Iwayanagi T."/>
            <person name="Wagatsuma M."/>
            <person name="Shiratori A."/>
            <person name="Sudo H."/>
            <person name="Hosoiri T."/>
            <person name="Kaku Y."/>
            <person name="Kodaira H."/>
            <person name="Kondo H."/>
            <person name="Sugawara M."/>
            <person name="Takahashi M."/>
            <person name="Kanda K."/>
            <person name="Yokoi T."/>
            <person name="Furuya T."/>
            <person name="Kikkawa E."/>
            <person name="Omura Y."/>
            <person name="Abe K."/>
            <person name="Kamihara K."/>
            <person name="Katsuta N."/>
            <person name="Sato K."/>
            <person name="Tanikawa M."/>
            <person name="Yamazaki M."/>
            <person name="Ninomiya K."/>
            <person name="Ishibashi T."/>
            <person name="Yamashita H."/>
            <person name="Murakawa K."/>
            <person name="Fujimori K."/>
            <person name="Tanai H."/>
            <person name="Kimata M."/>
            <person name="Watanabe M."/>
            <person name="Hiraoka S."/>
            <person name="Chiba Y."/>
            <person name="Ishida S."/>
            <person name="Ono Y."/>
            <person name="Takiguchi S."/>
            <person name="Watanabe S."/>
            <person name="Yosida M."/>
            <person name="Hotuta T."/>
            <person name="Kusano J."/>
            <person name="Kanehori K."/>
            <person name="Takahashi-Fujii A."/>
            <person name="Hara H."/>
            <person name="Tanase T.-O."/>
            <person name="Nomura Y."/>
            <person name="Togiya S."/>
            <person name="Komai F."/>
            <person name="Hara R."/>
            <person name="Takeuchi K."/>
            <person name="Arita M."/>
            <person name="Imose N."/>
            <person name="Musashino K."/>
            <person name="Yuuki H."/>
            <person name="Oshima A."/>
            <person name="Sasaki N."/>
            <person name="Aotsuka S."/>
            <person name="Yoshikawa Y."/>
            <person name="Matsunawa H."/>
            <person name="Ichihara T."/>
            <person name="Shiohata N."/>
            <person name="Sano S."/>
            <person name="Moriya S."/>
            <person name="Momiyama H."/>
            <person name="Satoh N."/>
            <person name="Takami S."/>
            <person name="Terashima Y."/>
            <person name="Suzuki O."/>
            <person name="Nakagawa S."/>
            <person name="Senoh A."/>
            <person name="Mizoguchi H."/>
            <person name="Goto Y."/>
            <person name="Shimizu F."/>
            <person name="Wakebe H."/>
            <person name="Hishigaki H."/>
            <person name="Watanabe T."/>
            <person name="Sugiyama A."/>
            <person name="Takemoto M."/>
            <person name="Kawakami B."/>
            <person name="Yamazaki M."/>
            <person name="Watanabe K."/>
            <person name="Kumagai A."/>
            <person name="Itakura S."/>
            <person name="Fukuzumi Y."/>
            <person name="Fujimori Y."/>
            <person name="Komiyama M."/>
            <person name="Tashiro H."/>
            <person name="Tanigami A."/>
            <person name="Fujiwara T."/>
            <person name="Ono T."/>
            <person name="Yamada K."/>
            <person name="Fujii Y."/>
            <person name="Ozaki K."/>
            <person name="Hirao M."/>
            <person name="Ohmori Y."/>
            <person name="Kawabata A."/>
            <person name="Hikiji T."/>
            <person name="Kobatake N."/>
            <person name="Inagaki H."/>
            <person name="Ikema Y."/>
            <person name="Okamoto S."/>
            <person name="Okitani R."/>
            <person name="Kawakami T."/>
            <person name="Noguchi S."/>
            <person name="Itoh T."/>
            <person name="Shigeta K."/>
            <person name="Senba T."/>
            <person name="Matsumura K."/>
            <person name="Nakajima Y."/>
            <person name="Mizuno T."/>
            <person name="Morinaga M."/>
            <person name="Sasaki M."/>
            <person name="Togashi T."/>
            <person name="Oyama M."/>
            <person name="Hata H."/>
            <person name="Watanabe M."/>
            <person name="Komatsu T."/>
            <person name="Mizushima-Sugano J."/>
            <person name="Satoh T."/>
            <person name="Shirai Y."/>
            <person name="Takahashi Y."/>
            <person name="Nakagawa K."/>
            <person name="Okumura K."/>
            <person name="Nagase T."/>
            <person name="Nomura N."/>
            <person name="Kikuchi H."/>
            <person name="Masuho Y."/>
            <person name="Yamashita R."/>
            <person name="Nakai K."/>
            <person name="Yada T."/>
            <person name="Nakamura Y."/>
            <person name="Ohara O."/>
            <person name="Isogai T."/>
            <person name="Sugano S."/>
        </authorList>
    </citation>
    <scope>NUCLEOTIDE SEQUENCE [LARGE SCALE MRNA] (ISOFORM 1)</scope>
    <source>
        <tissue>Small intestine</tissue>
    </source>
</reference>
<reference key="2">
    <citation type="journal article" date="2004" name="Nature">
        <title>The DNA sequence and biology of human chromosome 19.</title>
        <authorList>
            <person name="Grimwood J."/>
            <person name="Gordon L.A."/>
            <person name="Olsen A.S."/>
            <person name="Terry A."/>
            <person name="Schmutz J."/>
            <person name="Lamerdin J.E."/>
            <person name="Hellsten U."/>
            <person name="Goodstein D."/>
            <person name="Couronne O."/>
            <person name="Tran-Gyamfi M."/>
            <person name="Aerts A."/>
            <person name="Altherr M."/>
            <person name="Ashworth L."/>
            <person name="Bajorek E."/>
            <person name="Black S."/>
            <person name="Branscomb E."/>
            <person name="Caenepeel S."/>
            <person name="Carrano A.V."/>
            <person name="Caoile C."/>
            <person name="Chan Y.M."/>
            <person name="Christensen M."/>
            <person name="Cleland C.A."/>
            <person name="Copeland A."/>
            <person name="Dalin E."/>
            <person name="Dehal P."/>
            <person name="Denys M."/>
            <person name="Detter J.C."/>
            <person name="Escobar J."/>
            <person name="Flowers D."/>
            <person name="Fotopulos D."/>
            <person name="Garcia C."/>
            <person name="Georgescu A.M."/>
            <person name="Glavina T."/>
            <person name="Gomez M."/>
            <person name="Gonzales E."/>
            <person name="Groza M."/>
            <person name="Hammon N."/>
            <person name="Hawkins T."/>
            <person name="Haydu L."/>
            <person name="Ho I."/>
            <person name="Huang W."/>
            <person name="Israni S."/>
            <person name="Jett J."/>
            <person name="Kadner K."/>
            <person name="Kimball H."/>
            <person name="Kobayashi A."/>
            <person name="Larionov V."/>
            <person name="Leem S.-H."/>
            <person name="Lopez F."/>
            <person name="Lou Y."/>
            <person name="Lowry S."/>
            <person name="Malfatti S."/>
            <person name="Martinez D."/>
            <person name="McCready P.M."/>
            <person name="Medina C."/>
            <person name="Morgan J."/>
            <person name="Nelson K."/>
            <person name="Nolan M."/>
            <person name="Ovcharenko I."/>
            <person name="Pitluck S."/>
            <person name="Pollard M."/>
            <person name="Popkie A.P."/>
            <person name="Predki P."/>
            <person name="Quan G."/>
            <person name="Ramirez L."/>
            <person name="Rash S."/>
            <person name="Retterer J."/>
            <person name="Rodriguez A."/>
            <person name="Rogers S."/>
            <person name="Salamov A."/>
            <person name="Salazar A."/>
            <person name="She X."/>
            <person name="Smith D."/>
            <person name="Slezak T."/>
            <person name="Solovyev V."/>
            <person name="Thayer N."/>
            <person name="Tice H."/>
            <person name="Tsai M."/>
            <person name="Ustaszewska A."/>
            <person name="Vo N."/>
            <person name="Wagner M."/>
            <person name="Wheeler J."/>
            <person name="Wu K."/>
            <person name="Xie G."/>
            <person name="Yang J."/>
            <person name="Dubchak I."/>
            <person name="Furey T.S."/>
            <person name="DeJong P."/>
            <person name="Dickson M."/>
            <person name="Gordon D."/>
            <person name="Eichler E.E."/>
            <person name="Pennacchio L.A."/>
            <person name="Richardson P."/>
            <person name="Stubbs L."/>
            <person name="Rokhsar D.S."/>
            <person name="Myers R.M."/>
            <person name="Rubin E.M."/>
            <person name="Lucas S.M."/>
        </authorList>
    </citation>
    <scope>NUCLEOTIDE SEQUENCE [LARGE SCALE GENOMIC DNA]</scope>
</reference>
<reference key="3">
    <citation type="journal article" date="2004" name="Genome Res.">
        <title>The status, quality, and expansion of the NIH full-length cDNA project: the Mammalian Gene Collection (MGC).</title>
        <authorList>
            <consortium name="The MGC Project Team"/>
        </authorList>
    </citation>
    <scope>NUCLEOTIDE SEQUENCE [LARGE SCALE MRNA] (ISOFORMS 1 AND 2)</scope>
    <source>
        <tissue>Eye</tissue>
    </source>
</reference>
<reference key="4">
    <citation type="journal article" date="2011" name="J. Biol. Chem.">
        <title>Murine IGFL and human IGFL1 are induced in inflammatory skin conditions and bind to a novel TNF receptor family member, IGFLR1.</title>
        <authorList>
            <person name="Lobito A.A."/>
            <person name="Ramani S.R."/>
            <person name="Tom I."/>
            <person name="Bazan J.F."/>
            <person name="Luis E."/>
            <person name="Fairbrother W.J."/>
            <person name="Ouyang W."/>
            <person name="Gonzalez L.C."/>
        </authorList>
    </citation>
    <scope>FUNCTION</scope>
    <scope>SUBCELLULAR LOCATION</scope>
    <scope>INDUCTION</scope>
</reference>
<name>IGFR1_HUMAN</name>
<keyword id="KW-0025">Alternative splicing</keyword>
<keyword id="KW-1003">Cell membrane</keyword>
<keyword id="KW-0472">Membrane</keyword>
<keyword id="KW-1267">Proteomics identification</keyword>
<keyword id="KW-0675">Receptor</keyword>
<keyword id="KW-1185">Reference proteome</keyword>
<keyword id="KW-0732">Signal</keyword>
<keyword id="KW-0812">Transmembrane</keyword>
<keyword id="KW-1133">Transmembrane helix</keyword>
<dbReference type="EMBL" id="AK026226">
    <property type="protein sequence ID" value="BAB15400.1"/>
    <property type="molecule type" value="mRNA"/>
</dbReference>
<dbReference type="EMBL" id="AD000671">
    <property type="status" value="NOT_ANNOTATED_CDS"/>
    <property type="molecule type" value="Genomic_DNA"/>
</dbReference>
<dbReference type="EMBL" id="BC031329">
    <property type="protein sequence ID" value="AAH31329.1"/>
    <property type="molecule type" value="mRNA"/>
</dbReference>
<dbReference type="EMBL" id="BC126481">
    <property type="protein sequence ID" value="AAI26482.1"/>
    <property type="molecule type" value="mRNA"/>
</dbReference>
<dbReference type="EMBL" id="BC126483">
    <property type="protein sequence ID" value="AAI26484.1"/>
    <property type="molecule type" value="mRNA"/>
</dbReference>
<dbReference type="CCDS" id="CCDS12472.1">
    <molecule id="Q9H665-1"/>
</dbReference>
<dbReference type="CCDS" id="CCDS86751.1">
    <molecule id="Q9H665-2"/>
</dbReference>
<dbReference type="RefSeq" id="NP_001332933.1">
    <molecule id="Q9H665-2"/>
    <property type="nucleotide sequence ID" value="NM_001346004.2"/>
</dbReference>
<dbReference type="RefSeq" id="NP_001332934.1">
    <molecule id="Q9H665-2"/>
    <property type="nucleotide sequence ID" value="NM_001346005.2"/>
</dbReference>
<dbReference type="RefSeq" id="NP_078936.1">
    <molecule id="Q9H665-1"/>
    <property type="nucleotide sequence ID" value="NM_024660.4"/>
</dbReference>
<dbReference type="SMR" id="Q9H665"/>
<dbReference type="FunCoup" id="Q9H665">
    <property type="interactions" value="236"/>
</dbReference>
<dbReference type="IntAct" id="Q9H665">
    <property type="interactions" value="4"/>
</dbReference>
<dbReference type="STRING" id="9606.ENSP00000246532"/>
<dbReference type="BindingDB" id="Q9H665"/>
<dbReference type="ChEMBL" id="CHEMBL2029192"/>
<dbReference type="GlyGen" id="Q9H665">
    <property type="glycosylation" value="2 sites"/>
</dbReference>
<dbReference type="iPTMnet" id="Q9H665"/>
<dbReference type="PhosphoSitePlus" id="Q9H665"/>
<dbReference type="BioMuta" id="IGFLR1"/>
<dbReference type="DMDM" id="74718463"/>
<dbReference type="MassIVE" id="Q9H665"/>
<dbReference type="PaxDb" id="9606-ENSP00000246532"/>
<dbReference type="PeptideAtlas" id="Q9H665"/>
<dbReference type="ProteomicsDB" id="80959">
    <molecule id="Q9H665-1"/>
</dbReference>
<dbReference type="ProteomicsDB" id="80960">
    <molecule id="Q9H665-2"/>
</dbReference>
<dbReference type="Antibodypedia" id="2411">
    <property type="antibodies" value="86 antibodies from 17 providers"/>
</dbReference>
<dbReference type="DNASU" id="79713"/>
<dbReference type="Ensembl" id="ENST00000246532.6">
    <molecule id="Q9H665-1"/>
    <property type="protein sequence ID" value="ENSP00000246532.1"/>
    <property type="gene ID" value="ENSG00000126246.10"/>
</dbReference>
<dbReference type="Ensembl" id="ENST00000592537.5">
    <molecule id="Q9H665-1"/>
    <property type="protein sequence ID" value="ENSP00000466181.1"/>
    <property type="gene ID" value="ENSG00000126246.10"/>
</dbReference>
<dbReference type="Ensembl" id="ENST00000592889.1">
    <molecule id="Q9H665-2"/>
    <property type="protein sequence ID" value="ENSP00000467750.1"/>
    <property type="gene ID" value="ENSG00000126246.10"/>
</dbReference>
<dbReference type="GeneID" id="79713"/>
<dbReference type="KEGG" id="hsa:79713"/>
<dbReference type="MANE-Select" id="ENST00000246532.6">
    <property type="protein sequence ID" value="ENSP00000246532.1"/>
    <property type="RefSeq nucleotide sequence ID" value="NM_024660.4"/>
    <property type="RefSeq protein sequence ID" value="NP_078936.1"/>
</dbReference>
<dbReference type="UCSC" id="uc002obb.4">
    <molecule id="Q9H665-1"/>
    <property type="organism name" value="human"/>
</dbReference>
<dbReference type="AGR" id="HGNC:23620"/>
<dbReference type="CTD" id="79713"/>
<dbReference type="DisGeNET" id="79713"/>
<dbReference type="GeneCards" id="IGFLR1"/>
<dbReference type="HGNC" id="HGNC:23620">
    <property type="gene designation" value="IGFLR1"/>
</dbReference>
<dbReference type="HPA" id="ENSG00000126246">
    <property type="expression patterns" value="Tissue enhanced (liver)"/>
</dbReference>
<dbReference type="MIM" id="614143">
    <property type="type" value="gene"/>
</dbReference>
<dbReference type="neXtProt" id="NX_Q9H665"/>
<dbReference type="OpenTargets" id="ENSG00000126246"/>
<dbReference type="PharmGKB" id="PA134884390"/>
<dbReference type="VEuPathDB" id="HostDB:ENSG00000126246"/>
<dbReference type="eggNOG" id="ENOG502RZ9Q">
    <property type="taxonomic scope" value="Eukaryota"/>
</dbReference>
<dbReference type="GeneTree" id="ENSGT00390000005702"/>
<dbReference type="HOGENOM" id="CLU_877045_0_0_1"/>
<dbReference type="InParanoid" id="Q9H665"/>
<dbReference type="OMA" id="HLCRPKE"/>
<dbReference type="OrthoDB" id="8945565at2759"/>
<dbReference type="PAN-GO" id="Q9H665">
    <property type="GO annotations" value="1 GO annotation based on evolutionary models"/>
</dbReference>
<dbReference type="PhylomeDB" id="Q9H665"/>
<dbReference type="TreeFam" id="TF338761"/>
<dbReference type="PathwayCommons" id="Q9H665"/>
<dbReference type="SignaLink" id="Q9H665"/>
<dbReference type="BioGRID-ORCS" id="79713">
    <property type="hits" value="18 hits in 1159 CRISPR screens"/>
</dbReference>
<dbReference type="GenomeRNAi" id="79713"/>
<dbReference type="Pharos" id="Q9H665">
    <property type="development level" value="Tdark"/>
</dbReference>
<dbReference type="PRO" id="PR:Q9H665"/>
<dbReference type="Proteomes" id="UP000005640">
    <property type="component" value="Chromosome 19"/>
</dbReference>
<dbReference type="RNAct" id="Q9H665">
    <property type="molecule type" value="protein"/>
</dbReference>
<dbReference type="Bgee" id="ENSG00000126246">
    <property type="expression patterns" value="Expressed in granulocyte and 97 other cell types or tissues"/>
</dbReference>
<dbReference type="ExpressionAtlas" id="Q9H665">
    <property type="expression patterns" value="baseline and differential"/>
</dbReference>
<dbReference type="GO" id="GO:0005654">
    <property type="term" value="C:nucleoplasm"/>
    <property type="evidence" value="ECO:0000314"/>
    <property type="project" value="HPA"/>
</dbReference>
<dbReference type="GO" id="GO:0005886">
    <property type="term" value="C:plasma membrane"/>
    <property type="evidence" value="ECO:0000314"/>
    <property type="project" value="HPA"/>
</dbReference>
<dbReference type="FunFam" id="1.10.533.10:FF:000079">
    <property type="entry name" value="IGF like family receptor 1"/>
    <property type="match status" value="1"/>
</dbReference>
<dbReference type="Gene3D" id="1.10.533.10">
    <property type="entry name" value="Death Domain, Fas"/>
    <property type="match status" value="1"/>
</dbReference>
<dbReference type="InterPro" id="IPR011029">
    <property type="entry name" value="DEATH-like_dom_sf"/>
</dbReference>
<dbReference type="InterPro" id="IPR042355">
    <property type="entry name" value="IGFLR1"/>
</dbReference>
<dbReference type="PANTHER" id="PTHR14657">
    <property type="entry name" value="IGF-LIKE FAMILY RECEPTOR 1"/>
    <property type="match status" value="1"/>
</dbReference>
<dbReference type="PANTHER" id="PTHR14657:SF2">
    <property type="entry name" value="IGF-LIKE FAMILY RECEPTOR 1"/>
    <property type="match status" value="1"/>
</dbReference>
<dbReference type="SUPFAM" id="SSF47986">
    <property type="entry name" value="DEATH domain"/>
    <property type="match status" value="1"/>
</dbReference>
<evidence type="ECO:0000255" key="1"/>
<evidence type="ECO:0000256" key="2">
    <source>
        <dbReference type="SAM" id="MobiDB-lite"/>
    </source>
</evidence>
<evidence type="ECO:0000269" key="3">
    <source>
    </source>
</evidence>
<evidence type="ECO:0000303" key="4">
    <source>
    </source>
</evidence>
<gene>
    <name type="primary">IGFLR1</name>
    <name type="synonym">TMEM149</name>
    <name type="synonym">U2AF1L4</name>
</gene>
<protein>
    <recommendedName>
        <fullName>IGF-like family receptor 1</fullName>
    </recommendedName>
    <alternativeName>
        <fullName>Transmembrane protein 149</fullName>
    </alternativeName>
    <alternativeName>
        <fullName>U2 small nuclear RNA auxiliary factor 1-like 4</fullName>
    </alternativeName>
</protein>
<proteinExistence type="evidence at protein level"/>
<feature type="signal peptide" evidence="1">
    <location>
        <begin position="1"/>
        <end position="22"/>
    </location>
</feature>
<feature type="chain" id="PRO_0000290357" description="IGF-like family receptor 1">
    <location>
        <begin position="23"/>
        <end position="355"/>
    </location>
</feature>
<feature type="topological domain" description="Extracellular" evidence="1">
    <location>
        <begin position="23"/>
        <end position="163"/>
    </location>
</feature>
<feature type="transmembrane region" description="Helical" evidence="1">
    <location>
        <begin position="164"/>
        <end position="184"/>
    </location>
</feature>
<feature type="topological domain" description="Cytoplasmic" evidence="1">
    <location>
        <begin position="185"/>
        <end position="355"/>
    </location>
</feature>
<feature type="region of interest" description="Disordered" evidence="2">
    <location>
        <begin position="120"/>
        <end position="147"/>
    </location>
</feature>
<feature type="compositionally biased region" description="Low complexity" evidence="2">
    <location>
        <begin position="132"/>
        <end position="144"/>
    </location>
</feature>
<feature type="splice variant" id="VSP_026145" description="In isoform 2." evidence="4">
    <location>
        <begin position="53"/>
        <end position="240"/>
    </location>
</feature>
<feature type="sequence variant" id="VAR_032775" description="In dbSNP:rs34562867.">
    <original>W</original>
    <variation>R</variation>
    <location>
        <position position="189"/>
    </location>
</feature>